<sequence length="645" mass="74460">MEQINIQFPDGNKKAFDKGTTTEDIAQSISPGLRKKAVAGKFNGQLVDLTKPLETDGSIEIVTPGSEEALEVLRHSTAHLMAHAIKRLYGNVKFGVGPVIEGGFYYDFDIDQNISSDDFEQIEKTMKQIVNENMKIERKVVSRDEAKELFSNDEYKLELIDAIPEDENVTLYSQGDFTDLCRGVHVPSTAKIKEFKLLSTAGAYWRGDSNNKMLQRIYGTAFFDKKELKAHLQMLEERKERDHRKIGKELELFTNSQLVGAGLPLWLPNGATIRREIERYIVDKEVSMGYDHVYTPVLANVDLYKTSGHWDHYQEDMFPPMQLDETESMVLRPMNCPHHMMIYANKPHSYRELPIRIAELGTMHRYEASGAVSGLQRVRGMTLNDSHIFVRPDQIKEEFKRVVNMIIDVYKDFGFEDYSFRLSYRDPEDKEKYFDDDDMWNKAENMLKEAADELGLSYEEAIGEAAFYGPKLDVQVKTAMGKEETLSTAQLDFLLPERFDLTYIGQDGEHHRPVVIHRGVVSTMERFVAFLTEETKGAFPTWLAPKQVQIIPVNVDLHYDYARQLQDELKSQGVRVSIDDRNEKMGYKIREAQMQKIPYQIVVGDKEVENNQVNVRQYGSQDQETVEKDEFIWNLVDEIRLKKHR</sequence>
<protein>
    <recommendedName>
        <fullName evidence="1">Threonine--tRNA ligase</fullName>
        <ecNumber evidence="1">6.1.1.3</ecNumber>
    </recommendedName>
    <alternativeName>
        <fullName evidence="1">Threonyl-tRNA synthetase</fullName>
        <shortName evidence="1">ThrRS</shortName>
    </alternativeName>
</protein>
<dbReference type="EC" id="6.1.1.3" evidence="1"/>
<dbReference type="EMBL" id="CP000703">
    <property type="protein sequence ID" value="ABQ49530.1"/>
    <property type="molecule type" value="Genomic_DNA"/>
</dbReference>
<dbReference type="RefSeq" id="WP_000435132.1">
    <property type="nucleotide sequence ID" value="NC_009487.1"/>
</dbReference>
<dbReference type="SMR" id="A5ITK7"/>
<dbReference type="KEGG" id="saj:SaurJH9_1740"/>
<dbReference type="HOGENOM" id="CLU_008554_0_1_9"/>
<dbReference type="GO" id="GO:0005737">
    <property type="term" value="C:cytoplasm"/>
    <property type="evidence" value="ECO:0007669"/>
    <property type="project" value="UniProtKB-SubCell"/>
</dbReference>
<dbReference type="GO" id="GO:0005524">
    <property type="term" value="F:ATP binding"/>
    <property type="evidence" value="ECO:0007669"/>
    <property type="project" value="UniProtKB-UniRule"/>
</dbReference>
<dbReference type="GO" id="GO:0140096">
    <property type="term" value="F:catalytic activity, acting on a protein"/>
    <property type="evidence" value="ECO:0007669"/>
    <property type="project" value="UniProtKB-ARBA"/>
</dbReference>
<dbReference type="GO" id="GO:0046872">
    <property type="term" value="F:metal ion binding"/>
    <property type="evidence" value="ECO:0007669"/>
    <property type="project" value="UniProtKB-KW"/>
</dbReference>
<dbReference type="GO" id="GO:0004829">
    <property type="term" value="F:threonine-tRNA ligase activity"/>
    <property type="evidence" value="ECO:0007669"/>
    <property type="project" value="UniProtKB-UniRule"/>
</dbReference>
<dbReference type="GO" id="GO:0016740">
    <property type="term" value="F:transferase activity"/>
    <property type="evidence" value="ECO:0007669"/>
    <property type="project" value="UniProtKB-ARBA"/>
</dbReference>
<dbReference type="GO" id="GO:0000049">
    <property type="term" value="F:tRNA binding"/>
    <property type="evidence" value="ECO:0007669"/>
    <property type="project" value="UniProtKB-KW"/>
</dbReference>
<dbReference type="GO" id="GO:0006435">
    <property type="term" value="P:threonyl-tRNA aminoacylation"/>
    <property type="evidence" value="ECO:0007669"/>
    <property type="project" value="UniProtKB-UniRule"/>
</dbReference>
<dbReference type="CDD" id="cd01667">
    <property type="entry name" value="TGS_ThrRS"/>
    <property type="match status" value="1"/>
</dbReference>
<dbReference type="CDD" id="cd00860">
    <property type="entry name" value="ThrRS_anticodon"/>
    <property type="match status" value="1"/>
</dbReference>
<dbReference type="CDD" id="cd00771">
    <property type="entry name" value="ThrRS_core"/>
    <property type="match status" value="1"/>
</dbReference>
<dbReference type="FunFam" id="3.10.20.30:FF:000005">
    <property type="entry name" value="Threonine--tRNA ligase"/>
    <property type="match status" value="1"/>
</dbReference>
<dbReference type="FunFam" id="3.30.54.20:FF:000002">
    <property type="entry name" value="Threonine--tRNA ligase"/>
    <property type="match status" value="1"/>
</dbReference>
<dbReference type="FunFam" id="3.30.930.10:FF:000002">
    <property type="entry name" value="Threonine--tRNA ligase"/>
    <property type="match status" value="1"/>
</dbReference>
<dbReference type="FunFam" id="3.40.50.800:FF:000001">
    <property type="entry name" value="Threonine--tRNA ligase"/>
    <property type="match status" value="1"/>
</dbReference>
<dbReference type="FunFam" id="3.30.980.10:FF:000005">
    <property type="entry name" value="Threonyl-tRNA synthetase, mitochondrial"/>
    <property type="match status" value="1"/>
</dbReference>
<dbReference type="Gene3D" id="3.10.20.30">
    <property type="match status" value="1"/>
</dbReference>
<dbReference type="Gene3D" id="3.30.54.20">
    <property type="match status" value="1"/>
</dbReference>
<dbReference type="Gene3D" id="3.40.50.800">
    <property type="entry name" value="Anticodon-binding domain"/>
    <property type="match status" value="1"/>
</dbReference>
<dbReference type="Gene3D" id="3.30.930.10">
    <property type="entry name" value="Bira Bifunctional Protein, Domain 2"/>
    <property type="match status" value="1"/>
</dbReference>
<dbReference type="Gene3D" id="3.30.980.10">
    <property type="entry name" value="Threonyl-trna Synthetase, Chain A, domain 2"/>
    <property type="match status" value="1"/>
</dbReference>
<dbReference type="HAMAP" id="MF_00184">
    <property type="entry name" value="Thr_tRNA_synth"/>
    <property type="match status" value="1"/>
</dbReference>
<dbReference type="InterPro" id="IPR002314">
    <property type="entry name" value="aa-tRNA-synt_IIb"/>
</dbReference>
<dbReference type="InterPro" id="IPR006195">
    <property type="entry name" value="aa-tRNA-synth_II"/>
</dbReference>
<dbReference type="InterPro" id="IPR045864">
    <property type="entry name" value="aa-tRNA-synth_II/BPL/LPL"/>
</dbReference>
<dbReference type="InterPro" id="IPR004154">
    <property type="entry name" value="Anticodon-bd"/>
</dbReference>
<dbReference type="InterPro" id="IPR036621">
    <property type="entry name" value="Anticodon-bd_dom_sf"/>
</dbReference>
<dbReference type="InterPro" id="IPR012675">
    <property type="entry name" value="Beta-grasp_dom_sf"/>
</dbReference>
<dbReference type="InterPro" id="IPR004095">
    <property type="entry name" value="TGS"/>
</dbReference>
<dbReference type="InterPro" id="IPR012676">
    <property type="entry name" value="TGS-like"/>
</dbReference>
<dbReference type="InterPro" id="IPR002320">
    <property type="entry name" value="Thr-tRNA-ligase_IIa"/>
</dbReference>
<dbReference type="InterPro" id="IPR018163">
    <property type="entry name" value="Thr/Ala-tRNA-synth_IIc_edit"/>
</dbReference>
<dbReference type="InterPro" id="IPR047246">
    <property type="entry name" value="ThrRS_anticodon"/>
</dbReference>
<dbReference type="InterPro" id="IPR033728">
    <property type="entry name" value="ThrRS_core"/>
</dbReference>
<dbReference type="InterPro" id="IPR012947">
    <property type="entry name" value="tRNA_SAD"/>
</dbReference>
<dbReference type="NCBIfam" id="TIGR00418">
    <property type="entry name" value="thrS"/>
    <property type="match status" value="1"/>
</dbReference>
<dbReference type="PANTHER" id="PTHR11451:SF56">
    <property type="entry name" value="THREONINE--TRNA LIGASE 1"/>
    <property type="match status" value="1"/>
</dbReference>
<dbReference type="PANTHER" id="PTHR11451">
    <property type="entry name" value="THREONINE-TRNA LIGASE"/>
    <property type="match status" value="1"/>
</dbReference>
<dbReference type="Pfam" id="PF03129">
    <property type="entry name" value="HGTP_anticodon"/>
    <property type="match status" value="1"/>
</dbReference>
<dbReference type="Pfam" id="PF02824">
    <property type="entry name" value="TGS"/>
    <property type="match status" value="1"/>
</dbReference>
<dbReference type="Pfam" id="PF00587">
    <property type="entry name" value="tRNA-synt_2b"/>
    <property type="match status" value="1"/>
</dbReference>
<dbReference type="Pfam" id="PF07973">
    <property type="entry name" value="tRNA_SAD"/>
    <property type="match status" value="1"/>
</dbReference>
<dbReference type="PRINTS" id="PR01047">
    <property type="entry name" value="TRNASYNTHTHR"/>
</dbReference>
<dbReference type="SMART" id="SM00863">
    <property type="entry name" value="tRNA_SAD"/>
    <property type="match status" value="1"/>
</dbReference>
<dbReference type="SUPFAM" id="SSF52954">
    <property type="entry name" value="Class II aaRS ABD-related"/>
    <property type="match status" value="1"/>
</dbReference>
<dbReference type="SUPFAM" id="SSF55681">
    <property type="entry name" value="Class II aaRS and biotin synthetases"/>
    <property type="match status" value="1"/>
</dbReference>
<dbReference type="SUPFAM" id="SSF81271">
    <property type="entry name" value="TGS-like"/>
    <property type="match status" value="1"/>
</dbReference>
<dbReference type="SUPFAM" id="SSF55186">
    <property type="entry name" value="ThrRS/AlaRS common domain"/>
    <property type="match status" value="1"/>
</dbReference>
<dbReference type="PROSITE" id="PS50862">
    <property type="entry name" value="AA_TRNA_LIGASE_II"/>
    <property type="match status" value="1"/>
</dbReference>
<dbReference type="PROSITE" id="PS51880">
    <property type="entry name" value="TGS"/>
    <property type="match status" value="1"/>
</dbReference>
<accession>A5ITK7</accession>
<evidence type="ECO:0000255" key="1">
    <source>
        <dbReference type="HAMAP-Rule" id="MF_00184"/>
    </source>
</evidence>
<evidence type="ECO:0000255" key="2">
    <source>
        <dbReference type="PROSITE-ProRule" id="PRU01228"/>
    </source>
</evidence>
<reference key="1">
    <citation type="submission" date="2007-05" db="EMBL/GenBank/DDBJ databases">
        <title>Complete sequence of chromosome of Staphylococcus aureus subsp. aureus JH9.</title>
        <authorList>
            <consortium name="US DOE Joint Genome Institute"/>
            <person name="Copeland A."/>
            <person name="Lucas S."/>
            <person name="Lapidus A."/>
            <person name="Barry K."/>
            <person name="Detter J.C."/>
            <person name="Glavina del Rio T."/>
            <person name="Hammon N."/>
            <person name="Israni S."/>
            <person name="Pitluck S."/>
            <person name="Chain P."/>
            <person name="Malfatti S."/>
            <person name="Shin M."/>
            <person name="Vergez L."/>
            <person name="Schmutz J."/>
            <person name="Larimer F."/>
            <person name="Land M."/>
            <person name="Hauser L."/>
            <person name="Kyrpides N."/>
            <person name="Kim E."/>
            <person name="Tomasz A."/>
            <person name="Richardson P."/>
        </authorList>
    </citation>
    <scope>NUCLEOTIDE SEQUENCE [LARGE SCALE GENOMIC DNA]</scope>
    <source>
        <strain>JH9</strain>
    </source>
</reference>
<comment type="function">
    <text evidence="1">Catalyzes the attachment of threonine to tRNA(Thr) in a two-step reaction: L-threonine is first activated by ATP to form Thr-AMP and then transferred to the acceptor end of tRNA(Thr). Also edits incorrectly charged L-seryl-tRNA(Thr).</text>
</comment>
<comment type="catalytic activity">
    <reaction evidence="1">
        <text>tRNA(Thr) + L-threonine + ATP = L-threonyl-tRNA(Thr) + AMP + diphosphate + H(+)</text>
        <dbReference type="Rhea" id="RHEA:24624"/>
        <dbReference type="Rhea" id="RHEA-COMP:9670"/>
        <dbReference type="Rhea" id="RHEA-COMP:9704"/>
        <dbReference type="ChEBI" id="CHEBI:15378"/>
        <dbReference type="ChEBI" id="CHEBI:30616"/>
        <dbReference type="ChEBI" id="CHEBI:33019"/>
        <dbReference type="ChEBI" id="CHEBI:57926"/>
        <dbReference type="ChEBI" id="CHEBI:78442"/>
        <dbReference type="ChEBI" id="CHEBI:78534"/>
        <dbReference type="ChEBI" id="CHEBI:456215"/>
        <dbReference type="EC" id="6.1.1.3"/>
    </reaction>
</comment>
<comment type="cofactor">
    <cofactor evidence="1">
        <name>Zn(2+)</name>
        <dbReference type="ChEBI" id="CHEBI:29105"/>
    </cofactor>
    <text evidence="1">Binds 1 zinc ion per subunit.</text>
</comment>
<comment type="subunit">
    <text evidence="1">Homodimer.</text>
</comment>
<comment type="subcellular location">
    <subcellularLocation>
        <location evidence="1">Cytoplasm</location>
    </subcellularLocation>
</comment>
<comment type="similarity">
    <text evidence="1">Belongs to the class-II aminoacyl-tRNA synthetase family.</text>
</comment>
<proteinExistence type="inferred from homology"/>
<feature type="chain" id="PRO_1000077377" description="Threonine--tRNA ligase">
    <location>
        <begin position="1"/>
        <end position="645"/>
    </location>
</feature>
<feature type="domain" description="TGS" evidence="2">
    <location>
        <begin position="1"/>
        <end position="63"/>
    </location>
</feature>
<feature type="region of interest" description="Catalytic" evidence="1">
    <location>
        <begin position="242"/>
        <end position="540"/>
    </location>
</feature>
<feature type="binding site" evidence="1">
    <location>
        <position position="336"/>
    </location>
    <ligand>
        <name>Zn(2+)</name>
        <dbReference type="ChEBI" id="CHEBI:29105"/>
    </ligand>
</feature>
<feature type="binding site" evidence="1">
    <location>
        <position position="387"/>
    </location>
    <ligand>
        <name>Zn(2+)</name>
        <dbReference type="ChEBI" id="CHEBI:29105"/>
    </ligand>
</feature>
<feature type="binding site" evidence="1">
    <location>
        <position position="517"/>
    </location>
    <ligand>
        <name>Zn(2+)</name>
        <dbReference type="ChEBI" id="CHEBI:29105"/>
    </ligand>
</feature>
<keyword id="KW-0030">Aminoacyl-tRNA synthetase</keyword>
<keyword id="KW-0067">ATP-binding</keyword>
<keyword id="KW-0963">Cytoplasm</keyword>
<keyword id="KW-0436">Ligase</keyword>
<keyword id="KW-0479">Metal-binding</keyword>
<keyword id="KW-0547">Nucleotide-binding</keyword>
<keyword id="KW-0648">Protein biosynthesis</keyword>
<keyword id="KW-0694">RNA-binding</keyword>
<keyword id="KW-0820">tRNA-binding</keyword>
<keyword id="KW-0862">Zinc</keyword>
<gene>
    <name evidence="1" type="primary">thrS</name>
    <name type="ordered locus">SaurJH9_1740</name>
</gene>
<name>SYT_STAA9</name>
<organism>
    <name type="scientific">Staphylococcus aureus (strain JH9)</name>
    <dbReference type="NCBI Taxonomy" id="359786"/>
    <lineage>
        <taxon>Bacteria</taxon>
        <taxon>Bacillati</taxon>
        <taxon>Bacillota</taxon>
        <taxon>Bacilli</taxon>
        <taxon>Bacillales</taxon>
        <taxon>Staphylococcaceae</taxon>
        <taxon>Staphylococcus</taxon>
    </lineage>
</organism>